<proteinExistence type="inferred from homology"/>
<sequence length="79" mass="8773">MLVLARRSNQSIMIGDDIEIVIVDIKGDQVKIGVKAPKNVSVHRAEVYKEIQEENKKAAGTNIKPEDLGKLGDLFKKKT</sequence>
<reference key="1">
    <citation type="journal article" date="2008" name="PLoS ONE">
        <title>Genome sequence of the saprophyte Leptospira biflexa provides insights into the evolution of Leptospira and the pathogenesis of leptospirosis.</title>
        <authorList>
            <person name="Picardeau M."/>
            <person name="Bulach D.M."/>
            <person name="Bouchier C."/>
            <person name="Zuerner R.L."/>
            <person name="Zidane N."/>
            <person name="Wilson P.J."/>
            <person name="Creno S."/>
            <person name="Kuczek E.S."/>
            <person name="Bommezzadri S."/>
            <person name="Davis J.C."/>
            <person name="McGrath A."/>
            <person name="Johnson M.J."/>
            <person name="Boursaux-Eude C."/>
            <person name="Seemann T."/>
            <person name="Rouy Z."/>
            <person name="Coppel R.L."/>
            <person name="Rood J.I."/>
            <person name="Lajus A."/>
            <person name="Davies J.K."/>
            <person name="Medigue C."/>
            <person name="Adler B."/>
        </authorList>
    </citation>
    <scope>NUCLEOTIDE SEQUENCE [LARGE SCALE GENOMIC DNA]</scope>
    <source>
        <strain>Patoc 1 / ATCC 23582 / Paris</strain>
    </source>
</reference>
<accession>B0SQM8</accession>
<protein>
    <recommendedName>
        <fullName evidence="1">Translational regulator CsrA</fullName>
    </recommendedName>
</protein>
<comment type="function">
    <text evidence="1">A translational regulator that binds mRNA to regulate translation initiation and/or mRNA stability. Usually binds in the 5'-UTR at or near the Shine-Dalgarno sequence preventing ribosome-binding, thus repressing translation. Its main target seems to be the major flagellin gene, while its function is anatagonized by FliW.</text>
</comment>
<comment type="subunit">
    <text evidence="1">Homodimer; the beta-strands of each monomer intercalate to form a hydrophobic core, while the alpha-helices form wings that extend away from the core.</text>
</comment>
<comment type="subcellular location">
    <subcellularLocation>
        <location evidence="1">Cytoplasm</location>
    </subcellularLocation>
</comment>
<comment type="similarity">
    <text evidence="1">Belongs to the CsrA/RsmA family.</text>
</comment>
<name>CSRA_LEPBP</name>
<gene>
    <name evidence="1" type="primary">csrA</name>
    <name type="ordered locus">LEPBI_I3210</name>
</gene>
<dbReference type="EMBL" id="CP000786">
    <property type="protein sequence ID" value="ABZ99275.1"/>
    <property type="molecule type" value="Genomic_DNA"/>
</dbReference>
<dbReference type="RefSeq" id="WP_012390131.1">
    <property type="nucleotide sequence ID" value="NC_010602.1"/>
</dbReference>
<dbReference type="SMR" id="B0SQM8"/>
<dbReference type="STRING" id="456481.LEPBI_I3210"/>
<dbReference type="GeneID" id="93340871"/>
<dbReference type="KEGG" id="lbi:LEPBI_I3210"/>
<dbReference type="HOGENOM" id="CLU_164837_0_0_12"/>
<dbReference type="OrthoDB" id="9809061at2"/>
<dbReference type="BioCyc" id="LBIF456481:LEPBI_RS15720-MONOMER"/>
<dbReference type="Proteomes" id="UP000001847">
    <property type="component" value="Chromosome I"/>
</dbReference>
<dbReference type="GO" id="GO:0005829">
    <property type="term" value="C:cytosol"/>
    <property type="evidence" value="ECO:0007669"/>
    <property type="project" value="TreeGrafter"/>
</dbReference>
<dbReference type="GO" id="GO:0048027">
    <property type="term" value="F:mRNA 5'-UTR binding"/>
    <property type="evidence" value="ECO:0007669"/>
    <property type="project" value="UniProtKB-UniRule"/>
</dbReference>
<dbReference type="GO" id="GO:0044781">
    <property type="term" value="P:bacterial-type flagellum organization"/>
    <property type="evidence" value="ECO:0007669"/>
    <property type="project" value="UniProtKB-KW"/>
</dbReference>
<dbReference type="GO" id="GO:0006402">
    <property type="term" value="P:mRNA catabolic process"/>
    <property type="evidence" value="ECO:0007669"/>
    <property type="project" value="InterPro"/>
</dbReference>
<dbReference type="GO" id="GO:0045947">
    <property type="term" value="P:negative regulation of translational initiation"/>
    <property type="evidence" value="ECO:0007669"/>
    <property type="project" value="UniProtKB-UniRule"/>
</dbReference>
<dbReference type="GO" id="GO:1902208">
    <property type="term" value="P:regulation of bacterial-type flagellum assembly"/>
    <property type="evidence" value="ECO:0007669"/>
    <property type="project" value="UniProtKB-UniRule"/>
</dbReference>
<dbReference type="GO" id="GO:0006109">
    <property type="term" value="P:regulation of carbohydrate metabolic process"/>
    <property type="evidence" value="ECO:0007669"/>
    <property type="project" value="InterPro"/>
</dbReference>
<dbReference type="FunFam" id="2.60.40.4380:FF:000002">
    <property type="entry name" value="Translational regulator CsrA"/>
    <property type="match status" value="1"/>
</dbReference>
<dbReference type="Gene3D" id="2.60.40.4380">
    <property type="entry name" value="Translational regulator CsrA"/>
    <property type="match status" value="1"/>
</dbReference>
<dbReference type="HAMAP" id="MF_00167">
    <property type="entry name" value="CsrA"/>
    <property type="match status" value="1"/>
</dbReference>
<dbReference type="InterPro" id="IPR003751">
    <property type="entry name" value="CsrA"/>
</dbReference>
<dbReference type="InterPro" id="IPR036107">
    <property type="entry name" value="CsrA_sf"/>
</dbReference>
<dbReference type="NCBIfam" id="TIGR00202">
    <property type="entry name" value="csrA"/>
    <property type="match status" value="1"/>
</dbReference>
<dbReference type="NCBIfam" id="NF002469">
    <property type="entry name" value="PRK01712.1"/>
    <property type="match status" value="1"/>
</dbReference>
<dbReference type="PANTHER" id="PTHR34984">
    <property type="entry name" value="CARBON STORAGE REGULATOR"/>
    <property type="match status" value="1"/>
</dbReference>
<dbReference type="PANTHER" id="PTHR34984:SF1">
    <property type="entry name" value="CARBON STORAGE REGULATOR"/>
    <property type="match status" value="1"/>
</dbReference>
<dbReference type="Pfam" id="PF02599">
    <property type="entry name" value="CsrA"/>
    <property type="match status" value="1"/>
</dbReference>
<dbReference type="SUPFAM" id="SSF117130">
    <property type="entry name" value="CsrA-like"/>
    <property type="match status" value="1"/>
</dbReference>
<evidence type="ECO:0000255" key="1">
    <source>
        <dbReference type="HAMAP-Rule" id="MF_00167"/>
    </source>
</evidence>
<feature type="chain" id="PRO_1000097498" description="Translational regulator CsrA">
    <location>
        <begin position="1"/>
        <end position="79"/>
    </location>
</feature>
<organism>
    <name type="scientific">Leptospira biflexa serovar Patoc (strain Patoc 1 / ATCC 23582 / Paris)</name>
    <dbReference type="NCBI Taxonomy" id="456481"/>
    <lineage>
        <taxon>Bacteria</taxon>
        <taxon>Pseudomonadati</taxon>
        <taxon>Spirochaetota</taxon>
        <taxon>Spirochaetia</taxon>
        <taxon>Leptospirales</taxon>
        <taxon>Leptospiraceae</taxon>
        <taxon>Leptospira</taxon>
    </lineage>
</organism>
<keyword id="KW-1005">Bacterial flagellum biogenesis</keyword>
<keyword id="KW-0963">Cytoplasm</keyword>
<keyword id="KW-1185">Reference proteome</keyword>
<keyword id="KW-0678">Repressor</keyword>
<keyword id="KW-0694">RNA-binding</keyword>
<keyword id="KW-0810">Translation regulation</keyword>